<reference key="1">
    <citation type="journal article" date="2005" name="Chem. Commun. (Camb.)">
        <title>Equisetin biosynthesis in Fusarium heterosporum.</title>
        <authorList>
            <person name="Sims J.W."/>
            <person name="Fillmore J.P."/>
            <person name="Warner D.D."/>
            <person name="Schmidt E.W."/>
        </authorList>
    </citation>
    <scope>NUCLEOTIDE SEQUENCE [GENOMIC DNA]</scope>
    <source>
        <strain>ATCC 74349 / MF6069</strain>
    </source>
</reference>
<reference key="2">
    <citation type="journal article" date="2013" name="ACS Chem. Biol.">
        <title>Two related pyrrolidinedione synthetase loci in Fusarium heterosporum ATCC 74349 produce divergent metabolites.</title>
        <authorList>
            <person name="Kakule T.B."/>
            <person name="Sardar D."/>
            <person name="Lin Z."/>
            <person name="Schmidt E.W."/>
        </authorList>
    </citation>
    <scope>NUCLEOTIDE SEQUENCE [GENOMIC DNA]</scope>
    <scope>FUNCTION</scope>
    <scope>PATHWAY</scope>
    <source>
        <strain>ATCC 74349 / MF6069</strain>
    </source>
</reference>
<gene>
    <name evidence="3" type="primary">fsdK</name>
    <name evidence="2" type="synonym">eqi3</name>
</gene>
<keyword id="KW-0808">Transferase</keyword>
<accession>Q5SBK7</accession>
<organism>
    <name type="scientific">Fusarium heterosporum</name>
    <dbReference type="NCBI Taxonomy" id="42747"/>
    <lineage>
        <taxon>Eukaryota</taxon>
        <taxon>Fungi</taxon>
        <taxon>Dikarya</taxon>
        <taxon>Ascomycota</taxon>
        <taxon>Pezizomycotina</taxon>
        <taxon>Sordariomycetes</taxon>
        <taxon>Hypocreomycetidae</taxon>
        <taxon>Hypocreales</taxon>
        <taxon>Nectriaceae</taxon>
        <taxon>Fusarium</taxon>
        <taxon>Fusarium heterosporum species complex</taxon>
    </lineage>
</organism>
<name>FSDK_FUSHE</name>
<sequence>MSLNSASTREHPSEAWKSLAQYLPSRSTDLDYWWQRIGPSAALVLEKAGYSIKSQYDALLFLYHWVVPELGPSLLSTDHKWKSLLQGDGSAFELSWKWNTNDSPPEVRYVVEPINQFSGTLLDPLNSQPSMVFRHRLASILPNIDLTWCHHFAGSLFDHNKARLLREMMPEGHKMPAGYTVPSTLVALEFLQDGQVATKSYFIPRKHGQGVWLPIAQFEESIAELDPVNEARAAVVDFVSKDPESLTPIMLAVDDKDVSSARIKWYFATARTELSWAKEIMTLGGRITTKHLPHLEQQLDDLIELIKAVTGIASEYPQDVELPFAPRFDPSKGAGNFVPLPIPIAGYQVHFNIAPGSEVPGVKLYIPMRRYARDDASVAKGITSFMESRGRNTYIKEYTEMLAGLLPDGKELSSVHCLQTYVSCLFKKNGELEITTYLGMAPYGDNHKPMSI</sequence>
<dbReference type="EC" id="2.5.1.-" evidence="5"/>
<dbReference type="EMBL" id="AY700570">
    <property type="protein sequence ID" value="AAV66102.1"/>
    <property type="molecule type" value="Genomic_DNA"/>
</dbReference>
<dbReference type="SMR" id="Q5SBK7"/>
<dbReference type="GO" id="GO:0004659">
    <property type="term" value="F:prenyltransferase activity"/>
    <property type="evidence" value="ECO:0007669"/>
    <property type="project" value="TreeGrafter"/>
</dbReference>
<dbReference type="GO" id="GO:0009820">
    <property type="term" value="P:alkaloid metabolic process"/>
    <property type="evidence" value="ECO:0007669"/>
    <property type="project" value="InterPro"/>
</dbReference>
<dbReference type="CDD" id="cd13929">
    <property type="entry name" value="PT-DMATS_CymD"/>
    <property type="match status" value="1"/>
</dbReference>
<dbReference type="InterPro" id="IPR033964">
    <property type="entry name" value="Aro_prenylTrfase"/>
</dbReference>
<dbReference type="InterPro" id="IPR017795">
    <property type="entry name" value="Aro_prenylTrfase_DMATS"/>
</dbReference>
<dbReference type="InterPro" id="IPR012148">
    <property type="entry name" value="DMATS-type_fun"/>
</dbReference>
<dbReference type="NCBIfam" id="TIGR03429">
    <property type="entry name" value="arom_pren_DMATS"/>
    <property type="match status" value="1"/>
</dbReference>
<dbReference type="PANTHER" id="PTHR40627">
    <property type="entry name" value="INDOLE PRENYLTRANSFERASE TDIB-RELATED"/>
    <property type="match status" value="1"/>
</dbReference>
<dbReference type="PANTHER" id="PTHR40627:SF4">
    <property type="entry name" value="PRENYLTRANSFERASE ASQH1-RELATED"/>
    <property type="match status" value="1"/>
</dbReference>
<dbReference type="Pfam" id="PF11991">
    <property type="entry name" value="Trp_DMAT"/>
    <property type="match status" value="1"/>
</dbReference>
<dbReference type="PIRSF" id="PIRSF000509">
    <property type="entry name" value="Trp_DMAT"/>
    <property type="match status" value="1"/>
</dbReference>
<dbReference type="SFLD" id="SFLDS00036">
    <property type="entry name" value="Aromatic_Prenyltransferase"/>
    <property type="match status" value="1"/>
</dbReference>
<dbReference type="SFLD" id="SFLDG01162">
    <property type="entry name" value="I"/>
    <property type="match status" value="1"/>
</dbReference>
<protein>
    <recommendedName>
        <fullName evidence="5">Prenyltransferase fsdK</fullName>
        <ecNumber evidence="5">2.5.1.-</ecNumber>
    </recommendedName>
    <alternativeName>
        <fullName evidence="3">Fusaridione A biosynthesis protein K</fullName>
    </alternativeName>
</protein>
<evidence type="ECO:0000269" key="1">
    <source>
    </source>
</evidence>
<evidence type="ECO:0000303" key="2">
    <source>
    </source>
</evidence>
<evidence type="ECO:0000303" key="3">
    <source>
    </source>
</evidence>
<evidence type="ECO:0000305" key="4"/>
<evidence type="ECO:0000305" key="5">
    <source>
    </source>
</evidence>
<evidence type="ECO:0000305" key="6">
    <source>
    </source>
</evidence>
<comment type="function">
    <text evidence="1">Prenyltransferase; part of the gene cluster that mediates the biosynthesis of fusaridione A, a bright yellow trans-fused decalin-containing tetramic acid with antimicrobial activity (PubMed:23614392). The PKS module of fsdS catalyzes the formation of the polyketide unit which is then conjugated to L-tyrosine by the condensation domain of the fsdS NRPS module. Activity of the Dieckmann cyclase domain (RED) results in release of the intermediate fusaridione A (PubMed:23614392). The unstable pyrrolidinedione ring of fusaridione A is opened through a reverse-Dieckmann reaction to afford its ring-opened form (PubMed:23614392).</text>
</comment>
<comment type="pathway">
    <text evidence="6">Mycotoxin biosynthesis.</text>
</comment>
<comment type="similarity">
    <text evidence="4">Belongs to the tryptophan dimethylallyltransferase family.</text>
</comment>
<proteinExistence type="inferred from homology"/>
<feature type="chain" id="PRO_0000441316" description="Prenyltransferase fsdK">
    <location>
        <begin position="1"/>
        <end position="452"/>
    </location>
</feature>